<reference key="1">
    <citation type="journal article" date="2011" name="J. Bacteriol.">
        <title>Genome of Ochrobactrum anthropi ATCC 49188 T, a versatile opportunistic pathogen and symbiont of several eukaryotic hosts.</title>
        <authorList>
            <person name="Chain P.S."/>
            <person name="Lang D.M."/>
            <person name="Comerci D.J."/>
            <person name="Malfatti S.A."/>
            <person name="Vergez L.M."/>
            <person name="Shin M."/>
            <person name="Ugalde R.A."/>
            <person name="Garcia E."/>
            <person name="Tolmasky M.E."/>
        </authorList>
    </citation>
    <scope>NUCLEOTIDE SEQUENCE [LARGE SCALE GENOMIC DNA]</scope>
    <source>
        <strain>ATCC 49188 / DSM 6882 / CCUG 24695 / JCM 21032 / LMG 3331 / NBRC 15819 / NCTC 12168 / Alc 37</strain>
    </source>
</reference>
<evidence type="ECO:0000255" key="1">
    <source>
        <dbReference type="HAMAP-Rule" id="MF_00268"/>
    </source>
</evidence>
<keyword id="KW-0067">ATP-binding</keyword>
<keyword id="KW-0963">Cytoplasm</keyword>
<keyword id="KW-0227">DNA damage</keyword>
<keyword id="KW-0233">DNA recombination</keyword>
<keyword id="KW-0234">DNA repair</keyword>
<keyword id="KW-0238">DNA-binding</keyword>
<keyword id="KW-0547">Nucleotide-binding</keyword>
<keyword id="KW-1185">Reference proteome</keyword>
<keyword id="KW-0742">SOS response</keyword>
<gene>
    <name evidence="1" type="primary">recA</name>
    <name type="ordered locus">Oant_1986</name>
</gene>
<dbReference type="EMBL" id="CP000758">
    <property type="protein sequence ID" value="ABS14702.1"/>
    <property type="molecule type" value="Genomic_DNA"/>
</dbReference>
<dbReference type="RefSeq" id="WP_012091915.1">
    <property type="nucleotide sequence ID" value="NC_009667.1"/>
</dbReference>
<dbReference type="SMR" id="A6X0E8"/>
<dbReference type="STRING" id="439375.Oant_1986"/>
<dbReference type="KEGG" id="oan:Oant_1986"/>
<dbReference type="PATRIC" id="fig|439375.7.peg.2088"/>
<dbReference type="eggNOG" id="COG0468">
    <property type="taxonomic scope" value="Bacteria"/>
</dbReference>
<dbReference type="HOGENOM" id="CLU_040469_1_2_5"/>
<dbReference type="Proteomes" id="UP000002301">
    <property type="component" value="Chromosome 1"/>
</dbReference>
<dbReference type="GO" id="GO:0005829">
    <property type="term" value="C:cytosol"/>
    <property type="evidence" value="ECO:0007669"/>
    <property type="project" value="TreeGrafter"/>
</dbReference>
<dbReference type="GO" id="GO:0005524">
    <property type="term" value="F:ATP binding"/>
    <property type="evidence" value="ECO:0007669"/>
    <property type="project" value="UniProtKB-UniRule"/>
</dbReference>
<dbReference type="GO" id="GO:0016887">
    <property type="term" value="F:ATP hydrolysis activity"/>
    <property type="evidence" value="ECO:0007669"/>
    <property type="project" value="InterPro"/>
</dbReference>
<dbReference type="GO" id="GO:0140664">
    <property type="term" value="F:ATP-dependent DNA damage sensor activity"/>
    <property type="evidence" value="ECO:0007669"/>
    <property type="project" value="InterPro"/>
</dbReference>
<dbReference type="GO" id="GO:0003684">
    <property type="term" value="F:damaged DNA binding"/>
    <property type="evidence" value="ECO:0007669"/>
    <property type="project" value="UniProtKB-UniRule"/>
</dbReference>
<dbReference type="GO" id="GO:0003697">
    <property type="term" value="F:single-stranded DNA binding"/>
    <property type="evidence" value="ECO:0007669"/>
    <property type="project" value="UniProtKB-UniRule"/>
</dbReference>
<dbReference type="GO" id="GO:0006310">
    <property type="term" value="P:DNA recombination"/>
    <property type="evidence" value="ECO:0007669"/>
    <property type="project" value="UniProtKB-UniRule"/>
</dbReference>
<dbReference type="GO" id="GO:0006281">
    <property type="term" value="P:DNA repair"/>
    <property type="evidence" value="ECO:0007669"/>
    <property type="project" value="UniProtKB-UniRule"/>
</dbReference>
<dbReference type="GO" id="GO:0009432">
    <property type="term" value="P:SOS response"/>
    <property type="evidence" value="ECO:0007669"/>
    <property type="project" value="UniProtKB-UniRule"/>
</dbReference>
<dbReference type="CDD" id="cd00983">
    <property type="entry name" value="RecA"/>
    <property type="match status" value="1"/>
</dbReference>
<dbReference type="FunFam" id="3.40.50.300:FF:000087">
    <property type="entry name" value="Recombinase RecA"/>
    <property type="match status" value="1"/>
</dbReference>
<dbReference type="Gene3D" id="3.40.50.300">
    <property type="entry name" value="P-loop containing nucleotide triphosphate hydrolases"/>
    <property type="match status" value="1"/>
</dbReference>
<dbReference type="HAMAP" id="MF_00268">
    <property type="entry name" value="RecA"/>
    <property type="match status" value="1"/>
</dbReference>
<dbReference type="InterPro" id="IPR003593">
    <property type="entry name" value="AAA+_ATPase"/>
</dbReference>
<dbReference type="InterPro" id="IPR013765">
    <property type="entry name" value="DNA_recomb/repair_RecA"/>
</dbReference>
<dbReference type="InterPro" id="IPR020584">
    <property type="entry name" value="DNA_recomb/repair_RecA_CS"/>
</dbReference>
<dbReference type="InterPro" id="IPR027417">
    <property type="entry name" value="P-loop_NTPase"/>
</dbReference>
<dbReference type="InterPro" id="IPR049261">
    <property type="entry name" value="RecA-like_C"/>
</dbReference>
<dbReference type="InterPro" id="IPR049428">
    <property type="entry name" value="RecA-like_N"/>
</dbReference>
<dbReference type="InterPro" id="IPR020588">
    <property type="entry name" value="RecA_ATP-bd"/>
</dbReference>
<dbReference type="InterPro" id="IPR023400">
    <property type="entry name" value="RecA_C_sf"/>
</dbReference>
<dbReference type="InterPro" id="IPR020587">
    <property type="entry name" value="RecA_monomer-monomer_interface"/>
</dbReference>
<dbReference type="NCBIfam" id="TIGR02012">
    <property type="entry name" value="tigrfam_recA"/>
    <property type="match status" value="1"/>
</dbReference>
<dbReference type="PANTHER" id="PTHR45900:SF1">
    <property type="entry name" value="MITOCHONDRIAL DNA REPAIR PROTEIN RECA HOMOLOG-RELATED"/>
    <property type="match status" value="1"/>
</dbReference>
<dbReference type="PANTHER" id="PTHR45900">
    <property type="entry name" value="RECA"/>
    <property type="match status" value="1"/>
</dbReference>
<dbReference type="Pfam" id="PF00154">
    <property type="entry name" value="RecA"/>
    <property type="match status" value="1"/>
</dbReference>
<dbReference type="Pfam" id="PF21096">
    <property type="entry name" value="RecA_C"/>
    <property type="match status" value="1"/>
</dbReference>
<dbReference type="PRINTS" id="PR00142">
    <property type="entry name" value="RECA"/>
</dbReference>
<dbReference type="SMART" id="SM00382">
    <property type="entry name" value="AAA"/>
    <property type="match status" value="1"/>
</dbReference>
<dbReference type="SUPFAM" id="SSF52540">
    <property type="entry name" value="P-loop containing nucleoside triphosphate hydrolases"/>
    <property type="match status" value="1"/>
</dbReference>
<dbReference type="SUPFAM" id="SSF54752">
    <property type="entry name" value="RecA protein, C-terminal domain"/>
    <property type="match status" value="1"/>
</dbReference>
<dbReference type="PROSITE" id="PS00321">
    <property type="entry name" value="RECA_1"/>
    <property type="match status" value="1"/>
</dbReference>
<dbReference type="PROSITE" id="PS50162">
    <property type="entry name" value="RECA_2"/>
    <property type="match status" value="1"/>
</dbReference>
<dbReference type="PROSITE" id="PS50163">
    <property type="entry name" value="RECA_3"/>
    <property type="match status" value="1"/>
</dbReference>
<accession>A6X0E8</accession>
<sequence length="361" mass="38758">MSQNSLRLVEENSVDKTKALDAALSQIERAFGKGSIMRLGKNAPVIEIETVPTGSLSLDIALGVGGLPKGRIVEIYGPESSGKTTLALHTIAEAQKKGGICAFVDAEHALDPVYARKLGVDLENLLISQPDTGEQALEITDTLVRSGAIDVLVVDSVAALTPRAEIEGEMGDSLPGLQARLMSQALRKLTASISRSNCMVIFINQIRMKIGVMFGSPETTTGGNALKFYASVRLDIRRIGSIKERDEVVGNQTRVKVVKNKLAPPFKQVEFDIMYGAGVSKTGELVDLGVKAGVVEKSGAWFSYNSQRLGQGRENAKQYLKDNPEVAREIETTLRQNAGLIAEQFLEDGGPEDDAGDAAEM</sequence>
<protein>
    <recommendedName>
        <fullName evidence="1">Protein RecA</fullName>
    </recommendedName>
    <alternativeName>
        <fullName evidence="1">Recombinase A</fullName>
    </alternativeName>
</protein>
<feature type="chain" id="PRO_1000047957" description="Protein RecA">
    <location>
        <begin position="1"/>
        <end position="361"/>
    </location>
</feature>
<feature type="binding site" evidence="1">
    <location>
        <begin position="77"/>
        <end position="84"/>
    </location>
    <ligand>
        <name>ATP</name>
        <dbReference type="ChEBI" id="CHEBI:30616"/>
    </ligand>
</feature>
<comment type="function">
    <text evidence="1">Can catalyze the hydrolysis of ATP in the presence of single-stranded DNA, the ATP-dependent uptake of single-stranded DNA by duplex DNA, and the ATP-dependent hybridization of homologous single-stranded DNAs. It interacts with LexA causing its activation and leading to its autocatalytic cleavage.</text>
</comment>
<comment type="subcellular location">
    <subcellularLocation>
        <location evidence="1">Cytoplasm</location>
    </subcellularLocation>
</comment>
<comment type="similarity">
    <text evidence="1">Belongs to the RecA family.</text>
</comment>
<proteinExistence type="inferred from homology"/>
<name>RECA_BRUA4</name>
<organism>
    <name type="scientific">Brucella anthropi (strain ATCC 49188 / DSM 6882 / CCUG 24695 / JCM 21032 / LMG 3331 / NBRC 15819 / NCTC 12168 / Alc 37)</name>
    <name type="common">Ochrobactrum anthropi</name>
    <dbReference type="NCBI Taxonomy" id="439375"/>
    <lineage>
        <taxon>Bacteria</taxon>
        <taxon>Pseudomonadati</taxon>
        <taxon>Pseudomonadota</taxon>
        <taxon>Alphaproteobacteria</taxon>
        <taxon>Hyphomicrobiales</taxon>
        <taxon>Brucellaceae</taxon>
        <taxon>Brucella/Ochrobactrum group</taxon>
        <taxon>Brucella</taxon>
    </lineage>
</organism>